<dbReference type="EMBL" id="CR861140">
    <property type="protein sequence ID" value="CAH93215.1"/>
    <property type="molecule type" value="mRNA"/>
</dbReference>
<dbReference type="RefSeq" id="NP_001126892.1">
    <property type="nucleotide sequence ID" value="NM_001133420.1"/>
</dbReference>
<dbReference type="SMR" id="Q5R4V1"/>
<dbReference type="STRING" id="9601.ENSPPYP00000021013"/>
<dbReference type="GeneID" id="100173907"/>
<dbReference type="KEGG" id="pon:100173907"/>
<dbReference type="CTD" id="793"/>
<dbReference type="eggNOG" id="KOG0027">
    <property type="taxonomic scope" value="Eukaryota"/>
</dbReference>
<dbReference type="InParanoid" id="Q5R4V1"/>
<dbReference type="OrthoDB" id="428774at2759"/>
<dbReference type="Proteomes" id="UP000001595">
    <property type="component" value="Unplaced"/>
</dbReference>
<dbReference type="GO" id="GO:0005829">
    <property type="term" value="C:cytosol"/>
    <property type="evidence" value="ECO:0007669"/>
    <property type="project" value="TreeGrafter"/>
</dbReference>
<dbReference type="GO" id="GO:0043197">
    <property type="term" value="C:dendritic spine"/>
    <property type="evidence" value="ECO:0007669"/>
    <property type="project" value="TreeGrafter"/>
</dbReference>
<dbReference type="GO" id="GO:0005634">
    <property type="term" value="C:nucleus"/>
    <property type="evidence" value="ECO:0007669"/>
    <property type="project" value="TreeGrafter"/>
</dbReference>
<dbReference type="GO" id="GO:0043195">
    <property type="term" value="C:terminal bouton"/>
    <property type="evidence" value="ECO:0007669"/>
    <property type="project" value="TreeGrafter"/>
</dbReference>
<dbReference type="GO" id="GO:0005509">
    <property type="term" value="F:calcium ion binding"/>
    <property type="evidence" value="ECO:0000250"/>
    <property type="project" value="UniProtKB"/>
</dbReference>
<dbReference type="GO" id="GO:0005499">
    <property type="term" value="F:vitamin D binding"/>
    <property type="evidence" value="ECO:0007669"/>
    <property type="project" value="UniProtKB-KW"/>
</dbReference>
<dbReference type="GO" id="GO:1900271">
    <property type="term" value="P:regulation of long-term synaptic potentiation"/>
    <property type="evidence" value="ECO:0007669"/>
    <property type="project" value="TreeGrafter"/>
</dbReference>
<dbReference type="GO" id="GO:0099509">
    <property type="term" value="P:regulation of presynaptic cytosolic calcium ion concentration"/>
    <property type="evidence" value="ECO:0007669"/>
    <property type="project" value="TreeGrafter"/>
</dbReference>
<dbReference type="CDD" id="cd16176">
    <property type="entry name" value="EFh_HEF_CB"/>
    <property type="match status" value="1"/>
</dbReference>
<dbReference type="FunFam" id="1.10.238.10:FF:000108">
    <property type="entry name" value="Calbindin 1"/>
    <property type="match status" value="1"/>
</dbReference>
<dbReference type="FunFam" id="1.10.238.10:FF:000147">
    <property type="entry name" value="Calbindin 1"/>
    <property type="match status" value="1"/>
</dbReference>
<dbReference type="FunFam" id="1.10.238.10:FF:000054">
    <property type="entry name" value="Calbindin 2"/>
    <property type="match status" value="1"/>
</dbReference>
<dbReference type="Gene3D" id="1.10.238.10">
    <property type="entry name" value="EF-hand"/>
    <property type="match status" value="3"/>
</dbReference>
<dbReference type="InterPro" id="IPR051001">
    <property type="entry name" value="Calbindin_Ca-bind"/>
</dbReference>
<dbReference type="InterPro" id="IPR029634">
    <property type="entry name" value="Calbindin_six-EFh_dom"/>
</dbReference>
<dbReference type="InterPro" id="IPR011992">
    <property type="entry name" value="EF-hand-dom_pair"/>
</dbReference>
<dbReference type="InterPro" id="IPR018247">
    <property type="entry name" value="EF_Hand_1_Ca_BS"/>
</dbReference>
<dbReference type="InterPro" id="IPR002048">
    <property type="entry name" value="EF_hand_dom"/>
</dbReference>
<dbReference type="PANTHER" id="PTHR19972">
    <property type="entry name" value="CALBINDIN"/>
    <property type="match status" value="1"/>
</dbReference>
<dbReference type="PANTHER" id="PTHR19972:SF14">
    <property type="entry name" value="CALBINDIN"/>
    <property type="match status" value="1"/>
</dbReference>
<dbReference type="Pfam" id="PF00036">
    <property type="entry name" value="EF-hand_1"/>
    <property type="match status" value="1"/>
</dbReference>
<dbReference type="Pfam" id="PF13499">
    <property type="entry name" value="EF-hand_7"/>
    <property type="match status" value="1"/>
</dbReference>
<dbReference type="SMART" id="SM00054">
    <property type="entry name" value="EFh"/>
    <property type="match status" value="4"/>
</dbReference>
<dbReference type="SUPFAM" id="SSF47473">
    <property type="entry name" value="EF-hand"/>
    <property type="match status" value="2"/>
</dbReference>
<dbReference type="PROSITE" id="PS00018">
    <property type="entry name" value="EF_HAND_1"/>
    <property type="match status" value="4"/>
</dbReference>
<dbReference type="PROSITE" id="PS50222">
    <property type="entry name" value="EF_HAND_2"/>
    <property type="match status" value="5"/>
</dbReference>
<proteinExistence type="evidence at transcript level"/>
<reference key="1">
    <citation type="submission" date="2004-11" db="EMBL/GenBank/DDBJ databases">
        <authorList>
            <consortium name="The German cDNA consortium"/>
        </authorList>
    </citation>
    <scope>NUCLEOTIDE SEQUENCE [LARGE SCALE MRNA]</scope>
    <source>
        <tissue>Brain cortex</tissue>
    </source>
</reference>
<organism>
    <name type="scientific">Pongo abelii</name>
    <name type="common">Sumatran orangutan</name>
    <name type="synonym">Pongo pygmaeus abelii</name>
    <dbReference type="NCBI Taxonomy" id="9601"/>
    <lineage>
        <taxon>Eukaryota</taxon>
        <taxon>Metazoa</taxon>
        <taxon>Chordata</taxon>
        <taxon>Craniata</taxon>
        <taxon>Vertebrata</taxon>
        <taxon>Euteleostomi</taxon>
        <taxon>Mammalia</taxon>
        <taxon>Eutheria</taxon>
        <taxon>Euarchontoglires</taxon>
        <taxon>Primates</taxon>
        <taxon>Haplorrhini</taxon>
        <taxon>Catarrhini</taxon>
        <taxon>Hominidae</taxon>
        <taxon>Pongo</taxon>
    </lineage>
</organism>
<comment type="function">
    <text evidence="1">Buffers cytosolic calcium. May stimulate a membrane Ca(2+)-ATPase and a 3',5'-cyclic nucleotide phosphodiesterase (By similarity).</text>
</comment>
<comment type="subunit">
    <text evidence="3">Interacts with RANBP9.</text>
</comment>
<comment type="domain">
    <text evidence="3">This protein has four functional calcium-binding sites; potential sites II and VI have lost affinity for calcium.</text>
</comment>
<comment type="similarity">
    <text evidence="5">Belongs to the calbindin family.</text>
</comment>
<sequence length="261" mass="29995">MAESHLQSSLITASQFFEIWLHFDADGSGYLEGKELQNLIQELQQARKKAGLELSPEMKTFVDQYGQRDDGKIGIVELAHVLPTEENFLLLFRCQQLKSCEEFMKTWRKYDTDHGGFIETEELKNFLKDLLEKANKTVDDTKLAEYTDLMLKLFDSNNDGKLELTEMARLLPVQENFLLKFQGIKMCGKEFNKAFELYDQDGNGYIDENELDALLKDLCEKNKQDLDINNITTYKKNIMALSDGGKLYRTDLALILCAGDN</sequence>
<gene>
    <name type="primary">CALB1</name>
</gene>
<name>CALB1_PONAB</name>
<evidence type="ECO:0000250" key="1"/>
<evidence type="ECO:0000250" key="2">
    <source>
        <dbReference type="UniProtKB" id="P04467"/>
    </source>
</evidence>
<evidence type="ECO:0000250" key="3">
    <source>
        <dbReference type="UniProtKB" id="P05937"/>
    </source>
</evidence>
<evidence type="ECO:0000255" key="4">
    <source>
        <dbReference type="PROSITE-ProRule" id="PRU00448"/>
    </source>
</evidence>
<evidence type="ECO:0000305" key="5"/>
<feature type="initiator methionine" description="Removed" evidence="2">
    <location>
        <position position="1"/>
    </location>
</feature>
<feature type="chain" id="PRO_0000073474" description="Calbindin">
    <location>
        <begin position="2"/>
        <end position="261"/>
    </location>
</feature>
<feature type="domain" description="EF-hand 1" evidence="4">
    <location>
        <begin position="11"/>
        <end position="46"/>
    </location>
</feature>
<feature type="domain" description="EF-hand 2" evidence="4">
    <location>
        <begin position="53"/>
        <end position="88"/>
    </location>
</feature>
<feature type="domain" description="EF-hand 3" evidence="4">
    <location>
        <begin position="98"/>
        <end position="133"/>
    </location>
</feature>
<feature type="domain" description="EF-hand 4" evidence="4">
    <location>
        <begin position="142"/>
        <end position="177"/>
    </location>
</feature>
<feature type="domain" description="EF-hand 5" evidence="4">
    <location>
        <begin position="186"/>
        <end position="221"/>
    </location>
</feature>
<feature type="region of interest" description="Interaction with RANBP9" evidence="3">
    <location>
        <begin position="2"/>
        <end position="7"/>
    </location>
</feature>
<feature type="binding site" evidence="4">
    <location>
        <position position="24"/>
    </location>
    <ligand>
        <name>Ca(2+)</name>
        <dbReference type="ChEBI" id="CHEBI:29108"/>
        <label>1</label>
    </ligand>
</feature>
<feature type="binding site" evidence="4">
    <location>
        <position position="26"/>
    </location>
    <ligand>
        <name>Ca(2+)</name>
        <dbReference type="ChEBI" id="CHEBI:29108"/>
        <label>1</label>
    </ligand>
</feature>
<feature type="binding site" evidence="4">
    <location>
        <position position="28"/>
    </location>
    <ligand>
        <name>Ca(2+)</name>
        <dbReference type="ChEBI" id="CHEBI:29108"/>
        <label>1</label>
    </ligand>
</feature>
<feature type="binding site" evidence="4">
    <location>
        <position position="30"/>
    </location>
    <ligand>
        <name>Ca(2+)</name>
        <dbReference type="ChEBI" id="CHEBI:29108"/>
        <label>1</label>
    </ligand>
</feature>
<feature type="binding site" evidence="4">
    <location>
        <position position="35"/>
    </location>
    <ligand>
        <name>Ca(2+)</name>
        <dbReference type="ChEBI" id="CHEBI:29108"/>
        <label>1</label>
    </ligand>
</feature>
<feature type="binding site" evidence="4">
    <location>
        <position position="111"/>
    </location>
    <ligand>
        <name>Ca(2+)</name>
        <dbReference type="ChEBI" id="CHEBI:29108"/>
        <label>2</label>
    </ligand>
</feature>
<feature type="binding site" evidence="4">
    <location>
        <position position="113"/>
    </location>
    <ligand>
        <name>Ca(2+)</name>
        <dbReference type="ChEBI" id="CHEBI:29108"/>
        <label>2</label>
    </ligand>
</feature>
<feature type="binding site" evidence="4">
    <location>
        <position position="122"/>
    </location>
    <ligand>
        <name>Ca(2+)</name>
        <dbReference type="ChEBI" id="CHEBI:29108"/>
        <label>2</label>
    </ligand>
</feature>
<feature type="binding site" evidence="4">
    <location>
        <position position="155"/>
    </location>
    <ligand>
        <name>Ca(2+)</name>
        <dbReference type="ChEBI" id="CHEBI:29108"/>
        <label>3</label>
    </ligand>
</feature>
<feature type="binding site" evidence="4">
    <location>
        <position position="157"/>
    </location>
    <ligand>
        <name>Ca(2+)</name>
        <dbReference type="ChEBI" id="CHEBI:29108"/>
        <label>3</label>
    </ligand>
</feature>
<feature type="binding site" evidence="4">
    <location>
        <position position="159"/>
    </location>
    <ligand>
        <name>Ca(2+)</name>
        <dbReference type="ChEBI" id="CHEBI:29108"/>
        <label>3</label>
    </ligand>
</feature>
<feature type="binding site" evidence="4">
    <location>
        <position position="161"/>
    </location>
    <ligand>
        <name>Ca(2+)</name>
        <dbReference type="ChEBI" id="CHEBI:29108"/>
        <label>3</label>
    </ligand>
</feature>
<feature type="binding site" evidence="4">
    <location>
        <position position="166"/>
    </location>
    <ligand>
        <name>Ca(2+)</name>
        <dbReference type="ChEBI" id="CHEBI:29108"/>
        <label>3</label>
    </ligand>
</feature>
<feature type="binding site" evidence="4">
    <location>
        <position position="199"/>
    </location>
    <ligand>
        <name>Ca(2+)</name>
        <dbReference type="ChEBI" id="CHEBI:29108"/>
        <label>4</label>
    </ligand>
</feature>
<feature type="binding site" evidence="4">
    <location>
        <position position="201"/>
    </location>
    <ligand>
        <name>Ca(2+)</name>
        <dbReference type="ChEBI" id="CHEBI:29108"/>
        <label>4</label>
    </ligand>
</feature>
<feature type="binding site" evidence="4">
    <location>
        <position position="203"/>
    </location>
    <ligand>
        <name>Ca(2+)</name>
        <dbReference type="ChEBI" id="CHEBI:29108"/>
        <label>4</label>
    </ligand>
</feature>
<feature type="binding site" evidence="4">
    <location>
        <position position="205"/>
    </location>
    <ligand>
        <name>Ca(2+)</name>
        <dbReference type="ChEBI" id="CHEBI:29108"/>
        <label>4</label>
    </ligand>
</feature>
<feature type="binding site" evidence="4">
    <location>
        <position position="210"/>
    </location>
    <ligand>
        <name>Ca(2+)</name>
        <dbReference type="ChEBI" id="CHEBI:29108"/>
        <label>4</label>
    </ligand>
</feature>
<feature type="modified residue" description="N-acetylalanine" evidence="2">
    <location>
        <position position="2"/>
    </location>
</feature>
<keyword id="KW-0007">Acetylation</keyword>
<keyword id="KW-0106">Calcium</keyword>
<keyword id="KW-0479">Metal-binding</keyword>
<keyword id="KW-1185">Reference proteome</keyword>
<keyword id="KW-0677">Repeat</keyword>
<keyword id="KW-0848">Vitamin D</keyword>
<accession>Q5R4V1</accession>
<protein>
    <recommendedName>
        <fullName>Calbindin</fullName>
    </recommendedName>
</protein>